<gene>
    <name type="primary">MC1R</name>
</gene>
<name>MSHR_CALJA</name>
<reference key="1">
    <citation type="journal article" date="2003" name="Am. J. Phys. Anthropol.">
        <title>Evolution of a pigmentation gene, the melanocortin-1 receptor, in primates.</title>
        <authorList>
            <person name="Mundy N.I."/>
            <person name="Kelly J."/>
        </authorList>
    </citation>
    <scope>NUCLEOTIDE SEQUENCE [GENOMIC DNA]</scope>
    <source>
        <strain>Isolate 292</strain>
    </source>
</reference>
<keyword id="KW-1003">Cell membrane</keyword>
<keyword id="KW-0297">G-protein coupled receptor</keyword>
<keyword id="KW-0325">Glycoprotein</keyword>
<keyword id="KW-0449">Lipoprotein</keyword>
<keyword id="KW-0472">Membrane</keyword>
<keyword id="KW-0564">Palmitate</keyword>
<keyword id="KW-0675">Receptor</keyword>
<keyword id="KW-1185">Reference proteome</keyword>
<keyword id="KW-0807">Transducer</keyword>
<keyword id="KW-0812">Transmembrane</keyword>
<keyword id="KW-1133">Transmembrane helix</keyword>
<sequence length="344" mass="37575">MPMQGAQRKLLGSLNSTPTATSNPGLAANHTGAPCLEVSIPDGLFLSLGLVSLVENVLVVAAIAKNRNLHSSMYYFICCLALSDLLVSGSNMLETAIILLLEAGTLATRASVVQQLHNTIDVLTCSSMLCSLCFLGAIAVDRYISIFYALRYHSIMTLPRAQRAIAAIWVASVLSSTLFITYYDHAAVLLCLVVFFLAMLVLMAVLYVHMLARACQHAQGIIRLHNRQLPAHKGFGLRGAATLTILLGIFFLCWGPFFLHLTLVVFCPQHLTCNCIFKNFKVFLTLIICNTIIDPLIYAFRSQELRRTLKEVLLCSSWPGCWAEGGGDSVWPGSCVTLRGPLPP</sequence>
<accession>Q864H7</accession>
<comment type="function">
    <text evidence="1">Receptor for MSH (alpha, beta and gamma) and ACTH. The activity of this receptor is mediated by G proteins which activate adenylate cyclase. Mediates melanogenesis, the production of eumelanin (black/brown) and phaeomelanin (red/yellow), via regulation of cAMP signaling in melanocytes.</text>
</comment>
<comment type="subunit">
    <text evidence="1">Interacts with MGRN1, but does not undergo MGRN1-mediated ubiquitination; this interaction competes with GNAS-binding and thus inhibits agonist-induced cAMP production. Interacts with OPN3; the interaction results in a decrease in MC1R-mediated cAMP signaling and ultimately a decrease in melanin production in melanocytes.</text>
</comment>
<comment type="subcellular location">
    <subcellularLocation>
        <location evidence="1">Cell membrane</location>
        <topology evidence="2">Multi-pass membrane protein</topology>
    </subcellularLocation>
</comment>
<comment type="similarity">
    <text evidence="3">Belongs to the G-protein coupled receptor 1 family.</text>
</comment>
<organism>
    <name type="scientific">Callithrix jacchus</name>
    <name type="common">White-tufted-ear marmoset</name>
    <dbReference type="NCBI Taxonomy" id="9483"/>
    <lineage>
        <taxon>Eukaryota</taxon>
        <taxon>Metazoa</taxon>
        <taxon>Chordata</taxon>
        <taxon>Craniata</taxon>
        <taxon>Vertebrata</taxon>
        <taxon>Euteleostomi</taxon>
        <taxon>Mammalia</taxon>
        <taxon>Eutheria</taxon>
        <taxon>Euarchontoglires</taxon>
        <taxon>Primates</taxon>
        <taxon>Haplorrhini</taxon>
        <taxon>Platyrrhini</taxon>
        <taxon>Cebidae</taxon>
        <taxon>Callitrichinae</taxon>
        <taxon>Callithrix</taxon>
        <taxon>Callithrix</taxon>
    </lineage>
</organism>
<protein>
    <recommendedName>
        <fullName>Melanocyte-stimulating hormone receptor</fullName>
        <shortName>MSH-R</shortName>
    </recommendedName>
    <alternativeName>
        <fullName>Melanocortin receptor 1</fullName>
        <shortName>MC1-R</shortName>
    </alternativeName>
</protein>
<dbReference type="EMBL" id="AY205120">
    <property type="protein sequence ID" value="AAP30994.1"/>
    <property type="molecule type" value="Genomic_DNA"/>
</dbReference>
<dbReference type="SMR" id="Q864H7"/>
<dbReference type="FunCoup" id="Q864H7">
    <property type="interactions" value="873"/>
</dbReference>
<dbReference type="STRING" id="9483.ENSCJAP00000078887"/>
<dbReference type="GlyCosmos" id="Q864H7">
    <property type="glycosylation" value="1 site, No reported glycans"/>
</dbReference>
<dbReference type="eggNOG" id="KOG1375">
    <property type="taxonomic scope" value="Eukaryota"/>
</dbReference>
<dbReference type="eggNOG" id="KOG3656">
    <property type="taxonomic scope" value="Eukaryota"/>
</dbReference>
<dbReference type="InParanoid" id="Q864H7"/>
<dbReference type="Proteomes" id="UP000008225">
    <property type="component" value="Unplaced"/>
</dbReference>
<dbReference type="GO" id="GO:0005886">
    <property type="term" value="C:plasma membrane"/>
    <property type="evidence" value="ECO:0000250"/>
    <property type="project" value="UniProtKB"/>
</dbReference>
<dbReference type="GO" id="GO:0004980">
    <property type="term" value="F:melanocyte-stimulating hormone receptor activity"/>
    <property type="evidence" value="ECO:0007669"/>
    <property type="project" value="InterPro"/>
</dbReference>
<dbReference type="GO" id="GO:0007189">
    <property type="term" value="P:adenylate cyclase-activating G protein-coupled receptor signaling pathway"/>
    <property type="evidence" value="ECO:0007669"/>
    <property type="project" value="UniProtKB-ARBA"/>
</dbReference>
<dbReference type="CDD" id="cd15351">
    <property type="entry name" value="7tmA_MC1R"/>
    <property type="match status" value="1"/>
</dbReference>
<dbReference type="FunFam" id="1.20.1070.10:FF:000211">
    <property type="entry name" value="Melanocyte-stimulating hormone receptor"/>
    <property type="match status" value="1"/>
</dbReference>
<dbReference type="Gene3D" id="1.20.1070.10">
    <property type="entry name" value="Rhodopsin 7-helix transmembrane proteins"/>
    <property type="match status" value="1"/>
</dbReference>
<dbReference type="InterPro" id="IPR000276">
    <property type="entry name" value="GPCR_Rhodpsn"/>
</dbReference>
<dbReference type="InterPro" id="IPR017452">
    <property type="entry name" value="GPCR_Rhodpsn_7TM"/>
</dbReference>
<dbReference type="InterPro" id="IPR001671">
    <property type="entry name" value="Melcrt_ACTH_rcpt"/>
</dbReference>
<dbReference type="InterPro" id="IPR000761">
    <property type="entry name" value="MSH_rcpt"/>
</dbReference>
<dbReference type="PANTHER" id="PTHR22750">
    <property type="entry name" value="G-PROTEIN COUPLED RECEPTOR"/>
    <property type="match status" value="1"/>
</dbReference>
<dbReference type="Pfam" id="PF00001">
    <property type="entry name" value="7tm_1"/>
    <property type="match status" value="1"/>
</dbReference>
<dbReference type="PRINTS" id="PR00237">
    <property type="entry name" value="GPCRRHODOPSN"/>
</dbReference>
<dbReference type="PRINTS" id="PR00534">
    <property type="entry name" value="MCRFAMILY"/>
</dbReference>
<dbReference type="PRINTS" id="PR00536">
    <property type="entry name" value="MELNOCYTESHR"/>
</dbReference>
<dbReference type="SMART" id="SM01381">
    <property type="entry name" value="7TM_GPCR_Srsx"/>
    <property type="match status" value="1"/>
</dbReference>
<dbReference type="SUPFAM" id="SSF81321">
    <property type="entry name" value="Family A G protein-coupled receptor-like"/>
    <property type="match status" value="1"/>
</dbReference>
<dbReference type="PROSITE" id="PS00237">
    <property type="entry name" value="G_PROTEIN_RECEP_F1_1"/>
    <property type="match status" value="1"/>
</dbReference>
<dbReference type="PROSITE" id="PS50262">
    <property type="entry name" value="G_PROTEIN_RECEP_F1_2"/>
    <property type="match status" value="1"/>
</dbReference>
<feature type="chain" id="PRO_0000069797" description="Melanocyte-stimulating hormone receptor">
    <location>
        <begin position="1"/>
        <end position="344"/>
    </location>
</feature>
<feature type="topological domain" description="Extracellular" evidence="2">
    <location>
        <begin position="1"/>
        <end position="37"/>
    </location>
</feature>
<feature type="transmembrane region" description="Helical; Name=1" evidence="2">
    <location>
        <begin position="38"/>
        <end position="63"/>
    </location>
</feature>
<feature type="topological domain" description="Cytoplasmic" evidence="2">
    <location>
        <begin position="64"/>
        <end position="72"/>
    </location>
</feature>
<feature type="transmembrane region" description="Helical; Name=2" evidence="2">
    <location>
        <begin position="73"/>
        <end position="93"/>
    </location>
</feature>
<feature type="topological domain" description="Extracellular" evidence="2">
    <location>
        <begin position="94"/>
        <end position="118"/>
    </location>
</feature>
<feature type="transmembrane region" description="Helical; Name=3" evidence="2">
    <location>
        <begin position="119"/>
        <end position="140"/>
    </location>
</feature>
<feature type="topological domain" description="Cytoplasmic" evidence="2">
    <location>
        <begin position="141"/>
        <end position="163"/>
    </location>
</feature>
<feature type="transmembrane region" description="Helical; Name=4" evidence="2">
    <location>
        <begin position="164"/>
        <end position="183"/>
    </location>
</feature>
<feature type="topological domain" description="Extracellular" evidence="2">
    <location>
        <begin position="184"/>
        <end position="191"/>
    </location>
</feature>
<feature type="transmembrane region" description="Helical; Name=5" evidence="2">
    <location>
        <begin position="192"/>
        <end position="211"/>
    </location>
</feature>
<feature type="topological domain" description="Cytoplasmic" evidence="2">
    <location>
        <begin position="212"/>
        <end position="240"/>
    </location>
</feature>
<feature type="transmembrane region" description="Helical; Name=6" evidence="2">
    <location>
        <begin position="241"/>
        <end position="266"/>
    </location>
</feature>
<feature type="topological domain" description="Extracellular" evidence="2">
    <location>
        <begin position="267"/>
        <end position="279"/>
    </location>
</feature>
<feature type="transmembrane region" description="Helical; Name=7" evidence="2">
    <location>
        <begin position="280"/>
        <end position="300"/>
    </location>
</feature>
<feature type="topological domain" description="Cytoplasmic" evidence="2">
    <location>
        <begin position="301"/>
        <end position="344"/>
    </location>
</feature>
<feature type="lipid moiety-binding region" description="S-palmitoyl cysteine" evidence="2">
    <location>
        <position position="315"/>
    </location>
</feature>
<feature type="glycosylation site" description="N-linked (GlcNAc...) asparagine" evidence="2">
    <location>
        <position position="29"/>
    </location>
</feature>
<evidence type="ECO:0000250" key="1">
    <source>
        <dbReference type="UniProtKB" id="Q01726"/>
    </source>
</evidence>
<evidence type="ECO:0000255" key="2"/>
<evidence type="ECO:0000255" key="3">
    <source>
        <dbReference type="PROSITE-ProRule" id="PRU00521"/>
    </source>
</evidence>
<proteinExistence type="inferred from homology"/>